<name>DP87_DICDI</name>
<proteinExistence type="evidence at transcript level"/>
<protein>
    <recommendedName>
        <fullName>Prespore protein Dp87</fullName>
    </recommendedName>
</protein>
<accession>Q04503</accession>
<accession>Q54RC6</accession>
<gene>
    <name type="primary">cotD</name>
    <name type="synonym">Dp87</name>
    <name type="ORF">DDB_G0283149</name>
</gene>
<sequence>MRILYLASLLFLITLYLSPTFGWGGGRDCESHRSEYTCKSDRSCAYLPFVSCCGKKEFFCVNRDHRNCCDDLSCAKNTRTGEIFEIWSSCKPHRDFVPYHSPNTTTCESLGCEARGMECEWVESSPCYGTSCCPRIPRCVGHHGGGHKCDRMRCPEGFYCEEQGGSACCVPHHDGCGNIQCPWGHYCVNEHGKCRCVPHRPPPRPPVDQCRNQHCPHGYSCRVIKGCATCVRDARPPHNLCRGFGCPEGSHCEVLEKHPVCVRNHVPPHPPPPPQICGSVNCGPGYICTIINGHPTCIRGDGYLCNQTRCPHDYQCETISTNIVKCSPKNDECKWHRCPPGSSCFNSRNGPHCLANNVFPQLCKVTQCPTDFSCKMIRGNPTCIKARPPVPPPHCSTCAELSSACNHVGMICIQVPSNCTNTRFPCCPSHPICIHPSTTAASTIATTASTVATTTSATTAGTTTGGTTTGGSTSDSSAASSADSSAASSSPSSSAASSAASSEPSSSAASSSAPSSASSSAPSSASSSAPSSSASSSAASSAASSESSESSSATS</sequence>
<keyword id="KW-0325">Glycoprotein</keyword>
<keyword id="KW-1185">Reference proteome</keyword>
<keyword id="KW-0677">Repeat</keyword>
<keyword id="KW-0732">Signal</keyword>
<keyword id="KW-0749">Sporulation</keyword>
<organism>
    <name type="scientific">Dictyostelium discoideum</name>
    <name type="common">Social amoeba</name>
    <dbReference type="NCBI Taxonomy" id="44689"/>
    <lineage>
        <taxon>Eukaryota</taxon>
        <taxon>Amoebozoa</taxon>
        <taxon>Evosea</taxon>
        <taxon>Eumycetozoa</taxon>
        <taxon>Dictyostelia</taxon>
        <taxon>Dictyosteliales</taxon>
        <taxon>Dictyosteliaceae</taxon>
        <taxon>Dictyostelium</taxon>
    </lineage>
</organism>
<reference key="1">
    <citation type="journal article" date="1993" name="Development">
        <title>Developmental regulation of transcription of a novel prespore-specific gene (Dp87) in Dictyostelium discoideum.</title>
        <authorList>
            <person name="Ozaki T."/>
            <person name="Nakao H."/>
            <person name="Orii H."/>
            <person name="Morio T."/>
            <person name="Takeuchi I."/>
            <person name="Tasaka M."/>
        </authorList>
    </citation>
    <scope>NUCLEOTIDE SEQUENCE [GENOMIC DNA]</scope>
    <source>
        <strain>AX3</strain>
    </source>
</reference>
<reference key="2">
    <citation type="journal article" date="2005" name="Nature">
        <title>The genome of the social amoeba Dictyostelium discoideum.</title>
        <authorList>
            <person name="Eichinger L."/>
            <person name="Pachebat J.A."/>
            <person name="Gloeckner G."/>
            <person name="Rajandream M.A."/>
            <person name="Sucgang R."/>
            <person name="Berriman M."/>
            <person name="Song J."/>
            <person name="Olsen R."/>
            <person name="Szafranski K."/>
            <person name="Xu Q."/>
            <person name="Tunggal B."/>
            <person name="Kummerfeld S."/>
            <person name="Madera M."/>
            <person name="Konfortov B.A."/>
            <person name="Rivero F."/>
            <person name="Bankier A.T."/>
            <person name="Lehmann R."/>
            <person name="Hamlin N."/>
            <person name="Davies R."/>
            <person name="Gaudet P."/>
            <person name="Fey P."/>
            <person name="Pilcher K."/>
            <person name="Chen G."/>
            <person name="Saunders D."/>
            <person name="Sodergren E.J."/>
            <person name="Davis P."/>
            <person name="Kerhornou A."/>
            <person name="Nie X."/>
            <person name="Hall N."/>
            <person name="Anjard C."/>
            <person name="Hemphill L."/>
            <person name="Bason N."/>
            <person name="Farbrother P."/>
            <person name="Desany B."/>
            <person name="Just E."/>
            <person name="Morio T."/>
            <person name="Rost R."/>
            <person name="Churcher C.M."/>
            <person name="Cooper J."/>
            <person name="Haydock S."/>
            <person name="van Driessche N."/>
            <person name="Cronin A."/>
            <person name="Goodhead I."/>
            <person name="Muzny D.M."/>
            <person name="Mourier T."/>
            <person name="Pain A."/>
            <person name="Lu M."/>
            <person name="Harper D."/>
            <person name="Lindsay R."/>
            <person name="Hauser H."/>
            <person name="James K.D."/>
            <person name="Quiles M."/>
            <person name="Madan Babu M."/>
            <person name="Saito T."/>
            <person name="Buchrieser C."/>
            <person name="Wardroper A."/>
            <person name="Felder M."/>
            <person name="Thangavelu M."/>
            <person name="Johnson D."/>
            <person name="Knights A."/>
            <person name="Loulseged H."/>
            <person name="Mungall K.L."/>
            <person name="Oliver K."/>
            <person name="Price C."/>
            <person name="Quail M.A."/>
            <person name="Urushihara H."/>
            <person name="Hernandez J."/>
            <person name="Rabbinowitsch E."/>
            <person name="Steffen D."/>
            <person name="Sanders M."/>
            <person name="Ma J."/>
            <person name="Kohara Y."/>
            <person name="Sharp S."/>
            <person name="Simmonds M.N."/>
            <person name="Spiegler S."/>
            <person name="Tivey A."/>
            <person name="Sugano S."/>
            <person name="White B."/>
            <person name="Walker D."/>
            <person name="Woodward J.R."/>
            <person name="Winckler T."/>
            <person name="Tanaka Y."/>
            <person name="Shaulsky G."/>
            <person name="Schleicher M."/>
            <person name="Weinstock G.M."/>
            <person name="Rosenthal A."/>
            <person name="Cox E.C."/>
            <person name="Chisholm R.L."/>
            <person name="Gibbs R.A."/>
            <person name="Loomis W.F."/>
            <person name="Platzer M."/>
            <person name="Kay R.R."/>
            <person name="Williams J.G."/>
            <person name="Dear P.H."/>
            <person name="Noegel A.A."/>
            <person name="Barrell B.G."/>
            <person name="Kuspa A."/>
        </authorList>
    </citation>
    <scope>NUCLEOTIDE SEQUENCE [LARGE SCALE GENOMIC DNA]</scope>
    <source>
        <strain>AX4</strain>
    </source>
</reference>
<evidence type="ECO:0000255" key="1"/>
<evidence type="ECO:0000256" key="2">
    <source>
        <dbReference type="SAM" id="MobiDB-lite"/>
    </source>
</evidence>
<evidence type="ECO:0000305" key="3"/>
<dbReference type="EMBL" id="D13973">
    <property type="protein sequence ID" value="BAA03083.1"/>
    <property type="molecule type" value="Genomic_DNA"/>
</dbReference>
<dbReference type="EMBL" id="AAFI02000051">
    <property type="protein sequence ID" value="EAL65813.1"/>
    <property type="molecule type" value="Genomic_DNA"/>
</dbReference>
<dbReference type="RefSeq" id="XP_639219.1">
    <property type="nucleotide sequence ID" value="XM_634127.1"/>
</dbReference>
<dbReference type="FunCoup" id="Q04503">
    <property type="interactions" value="251"/>
</dbReference>
<dbReference type="STRING" id="44689.Q04503"/>
<dbReference type="GlyCosmos" id="Q04503">
    <property type="glycosylation" value="3 sites, No reported glycans"/>
</dbReference>
<dbReference type="GlyGen" id="Q04503">
    <property type="glycosylation" value="3 sites"/>
</dbReference>
<dbReference type="PaxDb" id="44689-DDB0191431"/>
<dbReference type="EnsemblProtists" id="EAL65813">
    <property type="protein sequence ID" value="EAL65813"/>
    <property type="gene ID" value="DDB_G0283149"/>
</dbReference>
<dbReference type="GeneID" id="8623992"/>
<dbReference type="KEGG" id="ddi:DDB_G0283149"/>
<dbReference type="dictyBase" id="DDB_G0283149">
    <property type="gene designation" value="cotD"/>
</dbReference>
<dbReference type="VEuPathDB" id="AmoebaDB:DDB_G0283149"/>
<dbReference type="eggNOG" id="KOG1217">
    <property type="taxonomic scope" value="Eukaryota"/>
</dbReference>
<dbReference type="HOGENOM" id="CLU_507566_0_0_1"/>
<dbReference type="InParanoid" id="Q04503"/>
<dbReference type="OMA" id="IFEIWSS"/>
<dbReference type="PhylomeDB" id="Q04503"/>
<dbReference type="PRO" id="PR:Q04503"/>
<dbReference type="Proteomes" id="UP000002195">
    <property type="component" value="Chromosome 4"/>
</dbReference>
<dbReference type="GO" id="GO:0031160">
    <property type="term" value="C:spore wall"/>
    <property type="evidence" value="ECO:0000314"/>
    <property type="project" value="dictyBase"/>
</dbReference>
<dbReference type="GO" id="GO:0030435">
    <property type="term" value="P:sporulation resulting in formation of a cellular spore"/>
    <property type="evidence" value="ECO:0000270"/>
    <property type="project" value="dictyBase"/>
</dbReference>
<dbReference type="InterPro" id="IPR007643">
    <property type="entry name" value="Dict_spore_N"/>
</dbReference>
<dbReference type="InterPro" id="IPR003645">
    <property type="entry name" value="Fol_N"/>
</dbReference>
<dbReference type="InterPro" id="IPR053121">
    <property type="entry name" value="Spore_Coat_Assembly"/>
</dbReference>
<dbReference type="PANTHER" id="PTHR35365">
    <property type="entry name" value="LP04239P"/>
    <property type="match status" value="1"/>
</dbReference>
<dbReference type="PANTHER" id="PTHR35365:SF18">
    <property type="entry name" value="MUCIN-19-LIKE-RELATED"/>
    <property type="match status" value="1"/>
</dbReference>
<dbReference type="Pfam" id="PF04562">
    <property type="entry name" value="Dicty_spore_N"/>
    <property type="match status" value="1"/>
</dbReference>
<dbReference type="SMART" id="SM00274">
    <property type="entry name" value="FOLN"/>
    <property type="match status" value="8"/>
</dbReference>
<feature type="signal peptide" evidence="1">
    <location>
        <begin position="1"/>
        <end position="22"/>
    </location>
</feature>
<feature type="chain" id="PRO_0000032667" description="Prespore protein Dp87">
    <location>
        <begin position="23"/>
        <end position="555"/>
    </location>
</feature>
<feature type="domain" description="DSCP-N">
    <location>
        <begin position="27"/>
        <end position="144"/>
    </location>
</feature>
<feature type="domain" description="Follistatin-like 1">
    <location>
        <begin position="148"/>
        <end position="170"/>
    </location>
</feature>
<feature type="domain" description="Follistatin-like 2">
    <location>
        <begin position="175"/>
        <end position="197"/>
    </location>
</feature>
<feature type="domain" description="Follistatin-like 3">
    <location>
        <begin position="209"/>
        <end position="231"/>
    </location>
</feature>
<feature type="domain" description="Follistatin-like 4">
    <location>
        <begin position="240"/>
        <end position="262"/>
    </location>
</feature>
<feature type="domain" description="Follistatin-like 5">
    <location>
        <begin position="276"/>
        <end position="298"/>
    </location>
</feature>
<feature type="domain" description="Follistatin-like 6">
    <location>
        <begin position="304"/>
        <end position="327"/>
    </location>
</feature>
<feature type="domain" description="Follistatin-like 7">
    <location>
        <begin position="332"/>
        <end position="354"/>
    </location>
</feature>
<feature type="domain" description="Follistatin-like 8">
    <location>
        <begin position="362"/>
        <end position="384"/>
    </location>
</feature>
<feature type="region of interest" description="Disordered" evidence="2">
    <location>
        <begin position="454"/>
        <end position="555"/>
    </location>
</feature>
<feature type="compositionally biased region" description="Low complexity" evidence="2">
    <location>
        <begin position="470"/>
        <end position="555"/>
    </location>
</feature>
<feature type="glycosylation site" description="N-linked (GlcNAc...) asparagine" evidence="1">
    <location>
        <position position="103"/>
    </location>
</feature>
<feature type="glycosylation site" description="N-linked (GlcNAc...) asparagine" evidence="1">
    <location>
        <position position="306"/>
    </location>
</feature>
<feature type="glycosylation site" description="N-linked (GlcNAc...) asparagine" evidence="1">
    <location>
        <position position="418"/>
    </location>
</feature>
<feature type="sequence conflict" description="In Ref. 1; BAA03083." evidence="3" ref="1">
    <original>G</original>
    <variation>C</variation>
    <location>
        <position position="54"/>
    </location>
</feature>
<feature type="sequence conflict" description="In Ref. 1; BAA03083." evidence="3" ref="1">
    <original>C</original>
    <variation>L</variation>
    <location>
        <position position="196"/>
    </location>
</feature>
<comment type="subcellular location">
    <subcellularLocation>
        <location>Spore wall</location>
    </subcellularLocation>
    <text>Stored in prespore vacuoles until it is discharged into the interspace of spores during spore formation.</text>
</comment>
<comment type="induction">
    <text>By exogenous cAMP, repressed by DIF.</text>
</comment>